<reference key="1">
    <citation type="journal article" date="2011" name="Proc. Natl. Acad. Sci. U.S.A.">
        <title>Genomic anatomy of Escherichia coli O157:H7 outbreaks.</title>
        <authorList>
            <person name="Eppinger M."/>
            <person name="Mammel M.K."/>
            <person name="Leclerc J.E."/>
            <person name="Ravel J."/>
            <person name="Cebula T.A."/>
        </authorList>
    </citation>
    <scope>NUCLEOTIDE SEQUENCE [LARGE SCALE GENOMIC DNA]</scope>
    <source>
        <strain>EC4115 / EHEC</strain>
    </source>
</reference>
<dbReference type="EMBL" id="CP001164">
    <property type="protein sequence ID" value="ACI37312.1"/>
    <property type="molecule type" value="Genomic_DNA"/>
</dbReference>
<dbReference type="RefSeq" id="WP_000189317.1">
    <property type="nucleotide sequence ID" value="NC_011353.1"/>
</dbReference>
<dbReference type="SMR" id="B5YS45"/>
<dbReference type="KEGG" id="ecf:ECH74115_4475"/>
<dbReference type="HOGENOM" id="CLU_135650_0_1_6"/>
<dbReference type="CDD" id="cd10456">
    <property type="entry name" value="GIY-YIG_UPF0213"/>
    <property type="match status" value="1"/>
</dbReference>
<dbReference type="FunFam" id="3.40.1440.10:FF:000002">
    <property type="entry name" value="UPF0213 protein YhbQ"/>
    <property type="match status" value="1"/>
</dbReference>
<dbReference type="Gene3D" id="3.40.1440.10">
    <property type="entry name" value="GIY-YIG endonuclease"/>
    <property type="match status" value="1"/>
</dbReference>
<dbReference type="HAMAP" id="MF_01029">
    <property type="entry name" value="UPF0213"/>
    <property type="match status" value="1"/>
</dbReference>
<dbReference type="InterPro" id="IPR000305">
    <property type="entry name" value="GIY-YIG_endonuc"/>
</dbReference>
<dbReference type="InterPro" id="IPR035901">
    <property type="entry name" value="GIY-YIG_endonuc_sf"/>
</dbReference>
<dbReference type="InterPro" id="IPR050190">
    <property type="entry name" value="UPF0213_domain"/>
</dbReference>
<dbReference type="InterPro" id="IPR022992">
    <property type="entry name" value="UPF0213_GIY-YIG_endonuc"/>
</dbReference>
<dbReference type="PANTHER" id="PTHR34477">
    <property type="entry name" value="UPF0213 PROTEIN YHBQ"/>
    <property type="match status" value="1"/>
</dbReference>
<dbReference type="PANTHER" id="PTHR34477:SF1">
    <property type="entry name" value="UPF0213 PROTEIN YHBQ"/>
    <property type="match status" value="1"/>
</dbReference>
<dbReference type="Pfam" id="PF01541">
    <property type="entry name" value="GIY-YIG"/>
    <property type="match status" value="1"/>
</dbReference>
<dbReference type="SMART" id="SM00465">
    <property type="entry name" value="GIYc"/>
    <property type="match status" value="1"/>
</dbReference>
<dbReference type="SUPFAM" id="SSF82771">
    <property type="entry name" value="GIY-YIG endonuclease"/>
    <property type="match status" value="1"/>
</dbReference>
<dbReference type="PROSITE" id="PS50164">
    <property type="entry name" value="GIY_YIG"/>
    <property type="match status" value="1"/>
</dbReference>
<comment type="similarity">
    <text evidence="1">Belongs to the UPF0213 family.</text>
</comment>
<feature type="chain" id="PRO_1000135743" description="UPF0213 protein YhbQ">
    <location>
        <begin position="1"/>
        <end position="100"/>
    </location>
</feature>
<feature type="domain" description="GIY-YIG" evidence="1">
    <location>
        <begin position="2"/>
        <end position="77"/>
    </location>
</feature>
<gene>
    <name evidence="1" type="primary">yhbQ</name>
    <name type="ordered locus">ECH74115_4475</name>
</gene>
<evidence type="ECO:0000255" key="1">
    <source>
        <dbReference type="HAMAP-Rule" id="MF_01029"/>
    </source>
</evidence>
<name>YHBQ_ECO5E</name>
<organism>
    <name type="scientific">Escherichia coli O157:H7 (strain EC4115 / EHEC)</name>
    <dbReference type="NCBI Taxonomy" id="444450"/>
    <lineage>
        <taxon>Bacteria</taxon>
        <taxon>Pseudomonadati</taxon>
        <taxon>Pseudomonadota</taxon>
        <taxon>Gammaproteobacteria</taxon>
        <taxon>Enterobacterales</taxon>
        <taxon>Enterobacteriaceae</taxon>
        <taxon>Escherichia</taxon>
    </lineage>
</organism>
<sequence length="100" mass="11241">MTPWFLYLIRTADNKLYTGITTDVERRYQQHQSGKGAKALRGKGELTLAFSAPVGDRSLALRAEYRVKQLTKRQKERLVAEGAGFAKLLSSLQTPEIKSD</sequence>
<accession>B5YS45</accession>
<proteinExistence type="inferred from homology"/>
<protein>
    <recommendedName>
        <fullName evidence="1">UPF0213 protein YhbQ</fullName>
    </recommendedName>
</protein>